<comment type="similarity">
    <text evidence="3">Belongs to the aldo/keto reductase family.</text>
</comment>
<sequence length="276" mass="30203">MGAPLVALNDGNSIPQVGLGVWQTPPEDTERAVAAALAAGYRHVDTAAAYGNEEQTGRAIAQSGLDRSQVYLVTKLWNSEQGYDATLAAFEASVDRLGVDYLDLYLIHWPVPEKNLFVDTFRAFARLREDGRIRSIGVSNFEPEHLRVLIDSTGIVPAVNQIELHPLLPQRELRELHAQLGIATEAWSPLGQGSLLAHPTVTGVAESHGKTAAQALIRWHMQLGNIVIPKSVNPQRIESNFDVFDFELSEQDMASISSLEDASRLGPDPKTFNFTG</sequence>
<accession>A3PXT0</accession>
<organism>
    <name type="scientific">Mycobacterium sp. (strain JLS)</name>
    <dbReference type="NCBI Taxonomy" id="164757"/>
    <lineage>
        <taxon>Bacteria</taxon>
        <taxon>Bacillati</taxon>
        <taxon>Actinomycetota</taxon>
        <taxon>Actinomycetes</taxon>
        <taxon>Mycobacteriales</taxon>
        <taxon>Mycobacteriaceae</taxon>
        <taxon>Mycobacterium</taxon>
    </lineage>
</organism>
<name>Y1919_MYCSJ</name>
<dbReference type="EC" id="1.1.1.-" evidence="1"/>
<dbReference type="EMBL" id="CP000580">
    <property type="protein sequence ID" value="ABN97707.1"/>
    <property type="molecule type" value="Genomic_DNA"/>
</dbReference>
<dbReference type="SMR" id="A3PXT0"/>
<dbReference type="KEGG" id="mjl:Mjls_1919"/>
<dbReference type="HOGENOM" id="CLU_023205_0_1_11"/>
<dbReference type="BioCyc" id="MSP164757:G1G8C-1939-MONOMER"/>
<dbReference type="GO" id="GO:0004033">
    <property type="term" value="F:aldo-keto reductase (NADPH) activity"/>
    <property type="evidence" value="ECO:0007669"/>
    <property type="project" value="TreeGrafter"/>
</dbReference>
<dbReference type="FunFam" id="3.20.20.100:FF:000015">
    <property type="entry name" value="Oxidoreductase, aldo/keto reductase family"/>
    <property type="match status" value="1"/>
</dbReference>
<dbReference type="Gene3D" id="3.20.20.100">
    <property type="entry name" value="NADP-dependent oxidoreductase domain"/>
    <property type="match status" value="1"/>
</dbReference>
<dbReference type="InterPro" id="IPR020471">
    <property type="entry name" value="AKR"/>
</dbReference>
<dbReference type="InterPro" id="IPR018170">
    <property type="entry name" value="Aldo/ket_reductase_CS"/>
</dbReference>
<dbReference type="InterPro" id="IPR023210">
    <property type="entry name" value="NADP_OxRdtase_dom"/>
</dbReference>
<dbReference type="InterPro" id="IPR036812">
    <property type="entry name" value="NADP_OxRdtase_dom_sf"/>
</dbReference>
<dbReference type="PANTHER" id="PTHR43827">
    <property type="entry name" value="2,5-DIKETO-D-GLUCONIC ACID REDUCTASE"/>
    <property type="match status" value="1"/>
</dbReference>
<dbReference type="PANTHER" id="PTHR43827:SF3">
    <property type="entry name" value="NADP-DEPENDENT OXIDOREDUCTASE DOMAIN-CONTAINING PROTEIN"/>
    <property type="match status" value="1"/>
</dbReference>
<dbReference type="Pfam" id="PF00248">
    <property type="entry name" value="Aldo_ket_red"/>
    <property type="match status" value="1"/>
</dbReference>
<dbReference type="PIRSF" id="PIRSF000097">
    <property type="entry name" value="AKR"/>
    <property type="match status" value="1"/>
</dbReference>
<dbReference type="PRINTS" id="PR00069">
    <property type="entry name" value="ALDKETRDTASE"/>
</dbReference>
<dbReference type="SUPFAM" id="SSF51430">
    <property type="entry name" value="NAD(P)-linked oxidoreductase"/>
    <property type="match status" value="1"/>
</dbReference>
<dbReference type="PROSITE" id="PS00062">
    <property type="entry name" value="ALDOKETO_REDUCTASE_2"/>
    <property type="match status" value="1"/>
</dbReference>
<dbReference type="PROSITE" id="PS00063">
    <property type="entry name" value="ALDOKETO_REDUCTASE_3"/>
    <property type="match status" value="1"/>
</dbReference>
<feature type="chain" id="PRO_0000380743" description="Aldo-keto reductase Mjls_1919">
    <location>
        <begin position="1"/>
        <end position="276"/>
    </location>
</feature>
<feature type="active site" description="Proton donor" evidence="2">
    <location>
        <position position="50"/>
    </location>
</feature>
<feature type="binding site" evidence="1">
    <location>
        <position position="190"/>
    </location>
    <ligand>
        <name>NADPH</name>
        <dbReference type="ChEBI" id="CHEBI:57783"/>
    </ligand>
</feature>
<feature type="binding site" evidence="1">
    <location>
        <position position="228"/>
    </location>
    <ligand>
        <name>NADPH</name>
        <dbReference type="ChEBI" id="CHEBI:57783"/>
    </ligand>
</feature>
<feature type="binding site" evidence="1">
    <location>
        <position position="230"/>
    </location>
    <ligand>
        <name>NADPH</name>
        <dbReference type="ChEBI" id="CHEBI:57783"/>
    </ligand>
</feature>
<feature type="binding site" evidence="1">
    <location>
        <position position="231"/>
    </location>
    <ligand>
        <name>NADPH</name>
        <dbReference type="ChEBI" id="CHEBI:57783"/>
    </ligand>
</feature>
<feature type="binding site" evidence="1">
    <location>
        <position position="232"/>
    </location>
    <ligand>
        <name>NADPH</name>
        <dbReference type="ChEBI" id="CHEBI:57783"/>
    </ligand>
</feature>
<feature type="binding site" evidence="1">
    <location>
        <position position="236"/>
    </location>
    <ligand>
        <name>NADPH</name>
        <dbReference type="ChEBI" id="CHEBI:57783"/>
    </ligand>
</feature>
<feature type="binding site" evidence="1">
    <location>
        <position position="239"/>
    </location>
    <ligand>
        <name>NADPH</name>
        <dbReference type="ChEBI" id="CHEBI:57783"/>
    </ligand>
</feature>
<feature type="binding site" evidence="1">
    <location>
        <position position="240"/>
    </location>
    <ligand>
        <name>NADPH</name>
        <dbReference type="ChEBI" id="CHEBI:57783"/>
    </ligand>
</feature>
<protein>
    <recommendedName>
        <fullName evidence="1">Aldo-keto reductase Mjls_1919</fullName>
        <ecNumber evidence="1">1.1.1.-</ecNumber>
    </recommendedName>
</protein>
<gene>
    <name type="ordered locus">Mjls_1919</name>
</gene>
<evidence type="ECO:0000250" key="1">
    <source>
        <dbReference type="UniProtKB" id="A0QV09"/>
    </source>
</evidence>
<evidence type="ECO:0000250" key="2">
    <source>
        <dbReference type="UniProtKB" id="P80874"/>
    </source>
</evidence>
<evidence type="ECO:0000305" key="3"/>
<proteinExistence type="inferred from homology"/>
<reference key="1">
    <citation type="submission" date="2007-02" db="EMBL/GenBank/DDBJ databases">
        <title>Complete sequence of Mycobacterium sp. JLS.</title>
        <authorList>
            <consortium name="US DOE Joint Genome Institute"/>
            <person name="Copeland A."/>
            <person name="Lucas S."/>
            <person name="Lapidus A."/>
            <person name="Barry K."/>
            <person name="Detter J.C."/>
            <person name="Glavina del Rio T."/>
            <person name="Hammon N."/>
            <person name="Israni S."/>
            <person name="Dalin E."/>
            <person name="Tice H."/>
            <person name="Pitluck S."/>
            <person name="Chain P."/>
            <person name="Malfatti S."/>
            <person name="Shin M."/>
            <person name="Vergez L."/>
            <person name="Schmutz J."/>
            <person name="Larimer F."/>
            <person name="Land M."/>
            <person name="Hauser L."/>
            <person name="Kyrpides N."/>
            <person name="Mikhailova N."/>
            <person name="Miller C.D."/>
            <person name="Anderson A.J."/>
            <person name="Sims R.C."/>
            <person name="Richardson P."/>
        </authorList>
    </citation>
    <scope>NUCLEOTIDE SEQUENCE [LARGE SCALE GENOMIC DNA]</scope>
    <source>
        <strain>JLS</strain>
    </source>
</reference>
<keyword id="KW-0521">NADP</keyword>
<keyword id="KW-0560">Oxidoreductase</keyword>